<protein>
    <recommendedName>
        <fullName>Gene 63 protein</fullName>
    </recommendedName>
    <alternativeName>
        <fullName>Gp63</fullName>
    </alternativeName>
</protein>
<proteinExistence type="predicted"/>
<organismHost>
    <name type="scientific">Mycobacterium</name>
    <dbReference type="NCBI Taxonomy" id="1763"/>
</organismHost>
<dbReference type="EMBL" id="AF022214">
    <property type="protein sequence ID" value="AAC18505.2"/>
    <property type="molecule type" value="Genomic_DNA"/>
</dbReference>
<dbReference type="PIR" id="F72807">
    <property type="entry name" value="F72807"/>
</dbReference>
<dbReference type="RefSeq" id="NP_046880.1">
    <property type="nucleotide sequence ID" value="NC_001900.1"/>
</dbReference>
<dbReference type="ABCD" id="O64255">
    <property type="antibodies" value="1 sequenced antibody"/>
</dbReference>
<dbReference type="GeneID" id="1261632"/>
<dbReference type="KEGG" id="vg:1261632"/>
<dbReference type="OrthoDB" id="19170at10239"/>
<dbReference type="Proteomes" id="UP000002131">
    <property type="component" value="Segment"/>
</dbReference>
<dbReference type="InterPro" id="IPR035341">
    <property type="entry name" value="Gp63"/>
</dbReference>
<dbReference type="Pfam" id="PF17471">
    <property type="entry name" value="GP63"/>
    <property type="match status" value="1"/>
</dbReference>
<feature type="chain" id="PRO_0000164799" description="Gene 63 protein">
    <location>
        <begin position="1"/>
        <end position="129"/>
    </location>
</feature>
<reference key="1">
    <citation type="journal article" date="1998" name="J. Mol. Biol.">
        <title>Genome structure of mycobacteriophage D29: implications for phage evolution.</title>
        <authorList>
            <person name="Ford M.E."/>
            <person name="Sarkis G.J."/>
            <person name="Belanger A.E."/>
            <person name="Hendrix R.W."/>
            <person name="Hatfull G.F."/>
        </authorList>
    </citation>
    <scope>NUCLEOTIDE SEQUENCE [LARGE SCALE GENOMIC DNA]</scope>
</reference>
<reference key="2">
    <citation type="submission" date="2021-06" db="EMBL/GenBank/DDBJ databases">
        <authorList>
            <person name="Ford M.E."/>
            <person name="Sarkis G.J."/>
            <person name="Belanger A.E."/>
            <person name="Hendrix R.W."/>
            <person name="Hatfull G.F."/>
        </authorList>
    </citation>
    <scope>SEQUENCE REVISION TO N-TERMINUS</scope>
</reference>
<organism>
    <name type="scientific">Mycobacterium phage D29</name>
    <name type="common">Mycobacteriophage D29</name>
    <dbReference type="NCBI Taxonomy" id="28369"/>
    <lineage>
        <taxon>Viruses</taxon>
        <taxon>Duplodnaviria</taxon>
        <taxon>Heunggongvirae</taxon>
        <taxon>Uroviricota</taxon>
        <taxon>Caudoviricetes</taxon>
        <taxon>Fromanvirus</taxon>
    </lineage>
</organism>
<accession>O64255</accession>
<gene>
    <name type="primary">63</name>
</gene>
<name>VG63_BPMD2</name>
<sequence length="129" mass="14384">MGAQGVTVRDLGSRVCSVRRAHGNRPGLNDKRSCAPTLFIHPLTATERNTQMTTPNAMPRKANPLHQQVLGALIKTRPTVWTHKAIDPESPDPKKPRVIETKVHGREVTGLARNVSEENVDRLAKRWIK</sequence>
<keyword id="KW-1185">Reference proteome</keyword>